<name>Y656_FINM2</name>
<organism>
    <name type="scientific">Finegoldia magna (strain ATCC 29328 / DSM 20472 / WAL 2508)</name>
    <name type="common">Peptostreptococcus magnus</name>
    <dbReference type="NCBI Taxonomy" id="334413"/>
    <lineage>
        <taxon>Bacteria</taxon>
        <taxon>Bacillati</taxon>
        <taxon>Bacillota</taxon>
        <taxon>Tissierellia</taxon>
        <taxon>Tissierellales</taxon>
        <taxon>Peptoniphilaceae</taxon>
        <taxon>Finegoldia</taxon>
    </lineage>
</organism>
<reference key="1">
    <citation type="journal article" date="2008" name="DNA Res.">
        <title>Complete genome sequence of Finegoldia magna, an anaerobic opportunistic pathogen.</title>
        <authorList>
            <person name="Goto T."/>
            <person name="Yamashita A."/>
            <person name="Hirakawa H."/>
            <person name="Matsutani M."/>
            <person name="Todo K."/>
            <person name="Ohshima K."/>
            <person name="Toh H."/>
            <person name="Miyamoto K."/>
            <person name="Kuhara S."/>
            <person name="Hattori M."/>
            <person name="Shimizu T."/>
            <person name="Akimoto S."/>
        </authorList>
    </citation>
    <scope>NUCLEOTIDE SEQUENCE [LARGE SCALE GENOMIC DNA]</scope>
    <source>
        <strain>ATCC 29328 / DSM 20472 / WAL 2508</strain>
    </source>
</reference>
<evidence type="ECO:0000255" key="1">
    <source>
        <dbReference type="HAMAP-Rule" id="MF_01503"/>
    </source>
</evidence>
<sequence>MESLGIGFSNLVNSNRIIAIVSPETNPIKRIVQKAKEDNNLIDVTFGRKTRSVIIMDSSHVVLSCLQPETLQMRLDKSNNKED</sequence>
<proteinExistence type="inferred from homology"/>
<protein>
    <recommendedName>
        <fullName evidence="1">Putative regulatory protein FMG_0656</fullName>
    </recommendedName>
</protein>
<gene>
    <name type="ordered locus">FMG_0656</name>
</gene>
<feature type="chain" id="PRO_0000373788" description="Putative regulatory protein FMG_0656">
    <location>
        <begin position="1"/>
        <end position="83"/>
    </location>
</feature>
<keyword id="KW-1185">Reference proteome</keyword>
<dbReference type="EMBL" id="AP008971">
    <property type="protein sequence ID" value="BAG08074.1"/>
    <property type="molecule type" value="Genomic_DNA"/>
</dbReference>
<dbReference type="RefSeq" id="WP_002838275.1">
    <property type="nucleotide sequence ID" value="NC_010376.1"/>
</dbReference>
<dbReference type="SMR" id="B0S134"/>
<dbReference type="STRING" id="334413.FMG_0656"/>
<dbReference type="KEGG" id="fma:FMG_0656"/>
<dbReference type="eggNOG" id="COG2052">
    <property type="taxonomic scope" value="Bacteria"/>
</dbReference>
<dbReference type="HOGENOM" id="CLU_165326_0_0_9"/>
<dbReference type="Proteomes" id="UP000001319">
    <property type="component" value="Chromosome"/>
</dbReference>
<dbReference type="HAMAP" id="MF_01503">
    <property type="entry name" value="RemA"/>
    <property type="match status" value="1"/>
</dbReference>
<dbReference type="InterPro" id="IPR007169">
    <property type="entry name" value="RemA-like"/>
</dbReference>
<dbReference type="NCBIfam" id="NF003315">
    <property type="entry name" value="PRK04323.1"/>
    <property type="match status" value="1"/>
</dbReference>
<dbReference type="PANTHER" id="PTHR38449:SF1">
    <property type="entry name" value="REGULATORY PROTEIN SSL2874-RELATED"/>
    <property type="match status" value="1"/>
</dbReference>
<dbReference type="PANTHER" id="PTHR38449">
    <property type="entry name" value="REGULATORY PROTEIN TM_1690-RELATED"/>
    <property type="match status" value="1"/>
</dbReference>
<dbReference type="Pfam" id="PF04025">
    <property type="entry name" value="RemA-like"/>
    <property type="match status" value="1"/>
</dbReference>
<comment type="similarity">
    <text evidence="1">Belongs to the RemA family.</text>
</comment>
<accession>B0S134</accession>